<organism>
    <name type="scientific">Streptococcus gordonii (strain Challis / ATCC 35105 / BCRC 15272 / CH1 / DL1 / V288)</name>
    <dbReference type="NCBI Taxonomy" id="467705"/>
    <lineage>
        <taxon>Bacteria</taxon>
        <taxon>Bacillati</taxon>
        <taxon>Bacillota</taxon>
        <taxon>Bacilli</taxon>
        <taxon>Lactobacillales</taxon>
        <taxon>Streptococcaceae</taxon>
        <taxon>Streptococcus</taxon>
    </lineage>
</organism>
<comment type="function">
    <text evidence="1">One of the primary rRNA binding proteins. Required for association of the 30S and 50S subunits to form the 70S ribosome, for tRNA binding and peptide bond formation. It has been suggested to have peptidyltransferase activity; this is somewhat controversial. Makes several contacts with the 16S rRNA in the 70S ribosome.</text>
</comment>
<comment type="subunit">
    <text evidence="1">Part of the 50S ribosomal subunit. Forms a bridge to the 30S subunit in the 70S ribosome.</text>
</comment>
<comment type="similarity">
    <text evidence="1">Belongs to the universal ribosomal protein uL2 family.</text>
</comment>
<reference key="1">
    <citation type="journal article" date="2007" name="J. Bacteriol.">
        <title>Genome-wide transcriptional changes in Streptococcus gordonii in response to competence signaling peptide.</title>
        <authorList>
            <person name="Vickerman M.M."/>
            <person name="Iobst S."/>
            <person name="Jesionowski A.M."/>
            <person name="Gill S.R."/>
        </authorList>
    </citation>
    <scope>NUCLEOTIDE SEQUENCE [LARGE SCALE GENOMIC DNA]</scope>
    <source>
        <strain>Challis / ATCC 35105 / BCRC 15272 / CH1 / DL1 / V288</strain>
    </source>
</reference>
<accession>A8AZM2</accession>
<feature type="chain" id="PRO_1000086358" description="Large ribosomal subunit protein uL2">
    <location>
        <begin position="1"/>
        <end position="277"/>
    </location>
</feature>
<feature type="region of interest" description="Disordered" evidence="2">
    <location>
        <begin position="219"/>
        <end position="277"/>
    </location>
</feature>
<feature type="compositionally biased region" description="Basic and acidic residues" evidence="2">
    <location>
        <begin position="264"/>
        <end position="277"/>
    </location>
</feature>
<gene>
    <name evidence="1" type="primary">rplB</name>
    <name type="ordered locus">SGO_1982</name>
</gene>
<name>RL2_STRGC</name>
<sequence>MGIRVYKPTTNGRRNMTSLDFAEITTSTPEKSLLVSLKSKAGRNNNGRITVRHQGGGHKRHYRLIDFKRNKDAVEAVVKTIEYDPNRSANIALVHYTDGVKAYIIAPKGLEVGQRIVSGPEADIKVGNALPLANIPVGTLVHNIELKPGRGGELVRAAGASAQVLGQEGKYTLVRLQSGEVRMILGTCRATVGVVGNEQHGLVNLGKAGRSRWKGIRPTVRGSVMNPNDHPHGGGEGKAPVGRKAPSTPWGKPALGLKTRNKKAKSDKLIVRRRNEK</sequence>
<protein>
    <recommendedName>
        <fullName evidence="1">Large ribosomal subunit protein uL2</fullName>
    </recommendedName>
    <alternativeName>
        <fullName evidence="3">50S ribosomal protein L2</fullName>
    </alternativeName>
</protein>
<proteinExistence type="inferred from homology"/>
<evidence type="ECO:0000255" key="1">
    <source>
        <dbReference type="HAMAP-Rule" id="MF_01320"/>
    </source>
</evidence>
<evidence type="ECO:0000256" key="2">
    <source>
        <dbReference type="SAM" id="MobiDB-lite"/>
    </source>
</evidence>
<evidence type="ECO:0000305" key="3"/>
<keyword id="KW-1185">Reference proteome</keyword>
<keyword id="KW-0687">Ribonucleoprotein</keyword>
<keyword id="KW-0689">Ribosomal protein</keyword>
<keyword id="KW-0694">RNA-binding</keyword>
<keyword id="KW-0699">rRNA-binding</keyword>
<dbReference type="EMBL" id="CP000725">
    <property type="protein sequence ID" value="ABV10320.1"/>
    <property type="molecule type" value="Genomic_DNA"/>
</dbReference>
<dbReference type="RefSeq" id="WP_002894482.1">
    <property type="nucleotide sequence ID" value="NC_009785.1"/>
</dbReference>
<dbReference type="SMR" id="A8AZM2"/>
<dbReference type="STRING" id="467705.SGO_1982"/>
<dbReference type="GeneID" id="93786845"/>
<dbReference type="KEGG" id="sgo:SGO_1982"/>
<dbReference type="eggNOG" id="COG0090">
    <property type="taxonomic scope" value="Bacteria"/>
</dbReference>
<dbReference type="HOGENOM" id="CLU_036235_2_1_9"/>
<dbReference type="Proteomes" id="UP000001131">
    <property type="component" value="Chromosome"/>
</dbReference>
<dbReference type="GO" id="GO:0015934">
    <property type="term" value="C:large ribosomal subunit"/>
    <property type="evidence" value="ECO:0007669"/>
    <property type="project" value="InterPro"/>
</dbReference>
<dbReference type="GO" id="GO:0019843">
    <property type="term" value="F:rRNA binding"/>
    <property type="evidence" value="ECO:0007669"/>
    <property type="project" value="UniProtKB-UniRule"/>
</dbReference>
<dbReference type="GO" id="GO:0003735">
    <property type="term" value="F:structural constituent of ribosome"/>
    <property type="evidence" value="ECO:0007669"/>
    <property type="project" value="InterPro"/>
</dbReference>
<dbReference type="GO" id="GO:0016740">
    <property type="term" value="F:transferase activity"/>
    <property type="evidence" value="ECO:0007669"/>
    <property type="project" value="InterPro"/>
</dbReference>
<dbReference type="GO" id="GO:0002181">
    <property type="term" value="P:cytoplasmic translation"/>
    <property type="evidence" value="ECO:0007669"/>
    <property type="project" value="TreeGrafter"/>
</dbReference>
<dbReference type="FunFam" id="2.30.30.30:FF:000001">
    <property type="entry name" value="50S ribosomal protein L2"/>
    <property type="match status" value="1"/>
</dbReference>
<dbReference type="FunFam" id="2.40.50.140:FF:000003">
    <property type="entry name" value="50S ribosomal protein L2"/>
    <property type="match status" value="1"/>
</dbReference>
<dbReference type="FunFam" id="4.10.950.10:FF:000001">
    <property type="entry name" value="50S ribosomal protein L2"/>
    <property type="match status" value="1"/>
</dbReference>
<dbReference type="Gene3D" id="2.30.30.30">
    <property type="match status" value="1"/>
</dbReference>
<dbReference type="Gene3D" id="2.40.50.140">
    <property type="entry name" value="Nucleic acid-binding proteins"/>
    <property type="match status" value="1"/>
</dbReference>
<dbReference type="Gene3D" id="4.10.950.10">
    <property type="entry name" value="Ribosomal protein L2, domain 3"/>
    <property type="match status" value="1"/>
</dbReference>
<dbReference type="HAMAP" id="MF_01320_B">
    <property type="entry name" value="Ribosomal_uL2_B"/>
    <property type="match status" value="1"/>
</dbReference>
<dbReference type="InterPro" id="IPR012340">
    <property type="entry name" value="NA-bd_OB-fold"/>
</dbReference>
<dbReference type="InterPro" id="IPR014722">
    <property type="entry name" value="Rib_uL2_dom2"/>
</dbReference>
<dbReference type="InterPro" id="IPR002171">
    <property type="entry name" value="Ribosomal_uL2"/>
</dbReference>
<dbReference type="InterPro" id="IPR005880">
    <property type="entry name" value="Ribosomal_uL2_bac/org-type"/>
</dbReference>
<dbReference type="InterPro" id="IPR022669">
    <property type="entry name" value="Ribosomal_uL2_C"/>
</dbReference>
<dbReference type="InterPro" id="IPR022671">
    <property type="entry name" value="Ribosomal_uL2_CS"/>
</dbReference>
<dbReference type="InterPro" id="IPR014726">
    <property type="entry name" value="Ribosomal_uL2_dom3"/>
</dbReference>
<dbReference type="InterPro" id="IPR022666">
    <property type="entry name" value="Ribosomal_uL2_RNA-bd_dom"/>
</dbReference>
<dbReference type="InterPro" id="IPR008991">
    <property type="entry name" value="Translation_prot_SH3-like_sf"/>
</dbReference>
<dbReference type="NCBIfam" id="TIGR01171">
    <property type="entry name" value="rplB_bact"/>
    <property type="match status" value="1"/>
</dbReference>
<dbReference type="PANTHER" id="PTHR13691:SF5">
    <property type="entry name" value="LARGE RIBOSOMAL SUBUNIT PROTEIN UL2M"/>
    <property type="match status" value="1"/>
</dbReference>
<dbReference type="PANTHER" id="PTHR13691">
    <property type="entry name" value="RIBOSOMAL PROTEIN L2"/>
    <property type="match status" value="1"/>
</dbReference>
<dbReference type="Pfam" id="PF00181">
    <property type="entry name" value="Ribosomal_L2"/>
    <property type="match status" value="1"/>
</dbReference>
<dbReference type="Pfam" id="PF03947">
    <property type="entry name" value="Ribosomal_L2_C"/>
    <property type="match status" value="1"/>
</dbReference>
<dbReference type="PIRSF" id="PIRSF002158">
    <property type="entry name" value="Ribosomal_L2"/>
    <property type="match status" value="1"/>
</dbReference>
<dbReference type="SMART" id="SM01383">
    <property type="entry name" value="Ribosomal_L2"/>
    <property type="match status" value="1"/>
</dbReference>
<dbReference type="SMART" id="SM01382">
    <property type="entry name" value="Ribosomal_L2_C"/>
    <property type="match status" value="1"/>
</dbReference>
<dbReference type="SUPFAM" id="SSF50249">
    <property type="entry name" value="Nucleic acid-binding proteins"/>
    <property type="match status" value="1"/>
</dbReference>
<dbReference type="SUPFAM" id="SSF50104">
    <property type="entry name" value="Translation proteins SH3-like domain"/>
    <property type="match status" value="1"/>
</dbReference>
<dbReference type="PROSITE" id="PS00467">
    <property type="entry name" value="RIBOSOMAL_L2"/>
    <property type="match status" value="1"/>
</dbReference>